<dbReference type="EMBL" id="CP017624">
    <property type="protein sequence ID" value="AOW27642.1"/>
    <property type="molecule type" value="Genomic_DNA"/>
</dbReference>
<dbReference type="RefSeq" id="XP_711489.1">
    <property type="nucleotide sequence ID" value="XM_706397.1"/>
</dbReference>
<dbReference type="SMR" id="Q59P39"/>
<dbReference type="BioGRID" id="1229991">
    <property type="interactions" value="1"/>
</dbReference>
<dbReference type="STRING" id="237561.Q59P39"/>
<dbReference type="EnsemblFungi" id="C2_06340W_A-T">
    <property type="protein sequence ID" value="C2_06340W_A-T-p1"/>
    <property type="gene ID" value="C2_06340W_A"/>
</dbReference>
<dbReference type="GeneID" id="3646929"/>
<dbReference type="KEGG" id="cal:CAALFM_C206340WA"/>
<dbReference type="CGD" id="CAL0000182054">
    <property type="gene designation" value="EFH1"/>
</dbReference>
<dbReference type="VEuPathDB" id="FungiDB:C2_06340W_A"/>
<dbReference type="eggNOG" id="ENOG502QW2C">
    <property type="taxonomic scope" value="Eukaryota"/>
</dbReference>
<dbReference type="HOGENOM" id="CLU_428924_0_0_1"/>
<dbReference type="InParanoid" id="Q59P39"/>
<dbReference type="OMA" id="DENTNCY"/>
<dbReference type="OrthoDB" id="5407653at2759"/>
<dbReference type="PHI-base" id="PHI:123269"/>
<dbReference type="PRO" id="PR:Q59P39"/>
<dbReference type="Proteomes" id="UP000000559">
    <property type="component" value="Chromosome 2"/>
</dbReference>
<dbReference type="GO" id="GO:0005634">
    <property type="term" value="C:nucleus"/>
    <property type="evidence" value="ECO:0000318"/>
    <property type="project" value="GO_Central"/>
</dbReference>
<dbReference type="GO" id="GO:0003700">
    <property type="term" value="F:DNA-binding transcription factor activity"/>
    <property type="evidence" value="ECO:0000314"/>
    <property type="project" value="CGD"/>
</dbReference>
<dbReference type="GO" id="GO:0043565">
    <property type="term" value="F:sequence-specific DNA binding"/>
    <property type="evidence" value="ECO:0000318"/>
    <property type="project" value="GO_Central"/>
</dbReference>
<dbReference type="GO" id="GO:0051701">
    <property type="term" value="P:biological process involved in interaction with host"/>
    <property type="evidence" value="ECO:0000315"/>
    <property type="project" value="CGD"/>
</dbReference>
<dbReference type="GO" id="GO:0000122">
    <property type="term" value="P:negative regulation of transcription by RNA polymerase II"/>
    <property type="evidence" value="ECO:0000315"/>
    <property type="project" value="CGD"/>
</dbReference>
<dbReference type="GO" id="GO:0036166">
    <property type="term" value="P:phenotypic switching"/>
    <property type="evidence" value="ECO:0000315"/>
    <property type="project" value="CGD"/>
</dbReference>
<dbReference type="GO" id="GO:1900241">
    <property type="term" value="P:positive regulation of phenotypic switching"/>
    <property type="evidence" value="ECO:0000315"/>
    <property type="project" value="CGD"/>
</dbReference>
<dbReference type="GO" id="GO:0045944">
    <property type="term" value="P:positive regulation of transcription by RNA polymerase II"/>
    <property type="evidence" value="ECO:0000315"/>
    <property type="project" value="CGD"/>
</dbReference>
<dbReference type="GO" id="GO:0007124">
    <property type="term" value="P:pseudohyphal growth"/>
    <property type="evidence" value="ECO:0000315"/>
    <property type="project" value="CGD"/>
</dbReference>
<dbReference type="GO" id="GO:0045595">
    <property type="term" value="P:regulation of cell differentiation"/>
    <property type="evidence" value="ECO:0000315"/>
    <property type="project" value="CGD"/>
</dbReference>
<dbReference type="Gene3D" id="3.10.260.10">
    <property type="entry name" value="Transcription regulator HTH, APSES-type DNA-binding domain"/>
    <property type="match status" value="1"/>
</dbReference>
<dbReference type="InterPro" id="IPR029790">
    <property type="entry name" value="EFG1/Phd1/StuA"/>
</dbReference>
<dbReference type="InterPro" id="IPR036887">
    <property type="entry name" value="HTH_APSES_sf"/>
</dbReference>
<dbReference type="InterPro" id="IPR018004">
    <property type="entry name" value="KilA/APSES_HTH"/>
</dbReference>
<dbReference type="InterPro" id="IPR003163">
    <property type="entry name" value="Tscrpt_reg_HTH_APSES-type"/>
</dbReference>
<dbReference type="PANTHER" id="PTHR47792">
    <property type="entry name" value="PROTEIN SOK2-RELATED"/>
    <property type="match status" value="1"/>
</dbReference>
<dbReference type="PANTHER" id="PTHR47792:SF1">
    <property type="entry name" value="PROTEIN SOK2-RELATED"/>
    <property type="match status" value="1"/>
</dbReference>
<dbReference type="Pfam" id="PF04383">
    <property type="entry name" value="KilA-N"/>
    <property type="match status" value="1"/>
</dbReference>
<dbReference type="SMART" id="SM01252">
    <property type="entry name" value="KilA-N"/>
    <property type="match status" value="1"/>
</dbReference>
<dbReference type="SUPFAM" id="SSF54616">
    <property type="entry name" value="DNA-binding domain of Mlu1-box binding protein MBP1"/>
    <property type="match status" value="1"/>
</dbReference>
<dbReference type="PROSITE" id="PS51299">
    <property type="entry name" value="HTH_APSES"/>
    <property type="match status" value="1"/>
</dbReference>
<comment type="function">
    <text evidence="3 4 5">Transcription factor that regulates filamentous growth through repression of EFG1. Regulates the level of colonizing fungi, favoring commensalism as opposed to candidiasis.</text>
</comment>
<comment type="subcellular location">
    <subcellularLocation>
        <location evidence="1">Nucleus</location>
    </subcellularLocation>
</comment>
<comment type="disruption phenotype">
    <text evidence="5">Exhibits increased colonization of the murine intestinal tract, a model of commensal colonization.</text>
</comment>
<comment type="similarity">
    <text evidence="6">Belongs to the EFG1/PHD1/stuA family.</text>
</comment>
<evidence type="ECO:0000255" key="1">
    <source>
        <dbReference type="PROSITE-ProRule" id="PRU00630"/>
    </source>
</evidence>
<evidence type="ECO:0000256" key="2">
    <source>
        <dbReference type="SAM" id="MobiDB-lite"/>
    </source>
</evidence>
<evidence type="ECO:0000269" key="3">
    <source>
    </source>
</evidence>
<evidence type="ECO:0000269" key="4">
    <source>
    </source>
</evidence>
<evidence type="ECO:0000269" key="5">
    <source>
    </source>
</evidence>
<evidence type="ECO:0000305" key="6"/>
<reference key="1">
    <citation type="journal article" date="2004" name="Proc. Natl. Acad. Sci. U.S.A.">
        <title>The diploid genome sequence of Candida albicans.</title>
        <authorList>
            <person name="Jones T."/>
            <person name="Federspiel N.A."/>
            <person name="Chibana H."/>
            <person name="Dungan J."/>
            <person name="Kalman S."/>
            <person name="Magee B.B."/>
            <person name="Newport G."/>
            <person name="Thorstenson Y.R."/>
            <person name="Agabian N."/>
            <person name="Magee P.T."/>
            <person name="Davis R.W."/>
            <person name="Scherer S."/>
        </authorList>
    </citation>
    <scope>NUCLEOTIDE SEQUENCE [LARGE SCALE GENOMIC DNA]</scope>
    <source>
        <strain>SC5314 / ATCC MYA-2876</strain>
    </source>
</reference>
<reference key="2">
    <citation type="journal article" date="2007" name="Genome Biol.">
        <title>Assembly of the Candida albicans genome into sixteen supercontigs aligned on the eight chromosomes.</title>
        <authorList>
            <person name="van het Hoog M."/>
            <person name="Rast T.J."/>
            <person name="Martchenko M."/>
            <person name="Grindle S."/>
            <person name="Dignard D."/>
            <person name="Hogues H."/>
            <person name="Cuomo C."/>
            <person name="Berriman M."/>
            <person name="Scherer S."/>
            <person name="Magee B.B."/>
            <person name="Whiteway M."/>
            <person name="Chibana H."/>
            <person name="Nantel A."/>
            <person name="Magee P.T."/>
        </authorList>
    </citation>
    <scope>GENOME REANNOTATION</scope>
    <source>
        <strain>SC5314 / ATCC MYA-2876</strain>
    </source>
</reference>
<reference key="3">
    <citation type="journal article" date="2013" name="Genome Biol.">
        <title>Assembly of a phased diploid Candida albicans genome facilitates allele-specific measurements and provides a simple model for repeat and indel structure.</title>
        <authorList>
            <person name="Muzzey D."/>
            <person name="Schwartz K."/>
            <person name="Weissman J.S."/>
            <person name="Sherlock G."/>
        </authorList>
    </citation>
    <scope>NUCLEOTIDE SEQUENCE [LARGE SCALE GENOMIC DNA]</scope>
    <scope>GENOME REANNOTATION</scope>
    <source>
        <strain>SC5314 / ATCC MYA-2876</strain>
    </source>
</reference>
<reference key="4">
    <citation type="journal article" date="2003" name="J. Mol. Biol.">
        <title>Adaptation of the Efg1p morphogenetic pathway in Candida albicans by negative autoregulation and PKA-dependent repression of the EFG1 gene.</title>
        <authorList>
            <person name="Tebarth B."/>
            <person name="Doedt T."/>
            <person name="Krishnamurthy S."/>
            <person name="Weide M."/>
            <person name="Monterola F."/>
            <person name="Dominguez A."/>
            <person name="Ernst J.F."/>
        </authorList>
    </citation>
    <scope>FUNCTION</scope>
</reference>
<reference key="5">
    <citation type="journal article" date="2004" name="Mol. Biol. Cell">
        <title>APSES proteins regulate morphogenesis and metabolism in Candida albicans.</title>
        <authorList>
            <person name="Doedt T."/>
            <person name="Krishnamurthy S."/>
            <person name="Bockmuhl D.P."/>
            <person name="Tebarth B."/>
            <person name="Stempel C."/>
            <person name="Russell C.L."/>
            <person name="Brown A.J."/>
            <person name="Ernst J.F."/>
        </authorList>
    </citation>
    <scope>FUNCTION</scope>
</reference>
<reference key="6">
    <citation type="journal article" date="2007" name="PLoS Pathog.">
        <title>Self-regulation of Candida albicans population size during GI colonization.</title>
        <authorList>
            <person name="White S.J."/>
            <person name="Rosenbach A."/>
            <person name="Lephart P."/>
            <person name="Nguyen D."/>
            <person name="Benjamin A."/>
            <person name="Tzipori S."/>
            <person name="Whiteway M."/>
            <person name="Mecsas J."/>
            <person name="Kumamoto C.A."/>
        </authorList>
    </citation>
    <scope>INDUCTION</scope>
    <scope>DISRUPTION PHENOTYPE</scope>
    <scope>FUNCTION</scope>
</reference>
<protein>
    <recommendedName>
        <fullName>Transcriptional regulator EFH1</fullName>
    </recommendedName>
    <alternativeName>
        <fullName>EFG1 homolog 1</fullName>
    </alternativeName>
</protein>
<accession>Q59P39</accession>
<accession>A0A1D8PHR3</accession>
<sequence>MNGIMTTSSHSNFYNQDLVGAPSSSDHIPGPSSQDQPTNNNSPQHHHQHDQSQTTHQNHPLNQPIHHHPTQQNQSESQQSRQSHHLQQQQQQQQQQQQNQHNQQNLASSSTSYEMPSIYQQFTGSYQQTRVPKNFLLENANYYTLQPGFPLVQAADYYSTPTTTSANDYQNSTINSIISPSFQMGSVSTPDTQNSSIRSKQQQQHSYQQQQPQQLSQSQHQSQVPDIFYTQGGTIGGYVTTKQQQKEFSRKTSGDQTLVPQTNSKLQQQISETSYSQQQQQQQSPPTPQKQQQQQHYQHQTTQPYGGTGFMLYSQTGGPSSSPVAGNISIPTTIATTGQPNSQFQFTYGSPQQGSSSKTNQMYLYQRQQQQQQQHQQPQSQQMSQISQLSQQIPPQGSSKNISINSTPTKSRASSITTRSGRQSRSTSISSFIPQPDYPERVIRPKVATTRWDDENTNCYQVRARNILVSRREDTNYINGTKLLNVIGMTRGKRDGILKTEKIKNVVKVGSMNLKGVWIPFDRAYEIARNEGVDSLLYPLFVKNIKQYFLTKGHKLKSEDDEQEILEEGMTRQREEVRREGRSNGVGDFHNEEEEEIVGIQEDAGPNTAENDVPGDDEEEEDDDDDDDDDEEEGEQDDEEEEDGSSTSMSSSKNSESKLLETRDVIKSIVEEGDSTTGNVSEVKYVHEYLERSPQSTAIKEEDLYYGSSHNTPLTVHKTL</sequence>
<feature type="chain" id="PRO_0000426078" description="Transcriptional regulator EFH1">
    <location>
        <begin position="1"/>
        <end position="720"/>
    </location>
</feature>
<feature type="domain" description="HTH APSES-type" evidence="1">
    <location>
        <begin position="446"/>
        <end position="552"/>
    </location>
</feature>
<feature type="DNA-binding region" description="H-T-H motif" evidence="1">
    <location>
        <begin position="480"/>
        <end position="501"/>
    </location>
</feature>
<feature type="region of interest" description="Disordered" evidence="2">
    <location>
        <begin position="1"/>
        <end position="111"/>
    </location>
</feature>
<feature type="region of interest" description="Disordered" evidence="2">
    <location>
        <begin position="181"/>
        <end position="223"/>
    </location>
</feature>
<feature type="region of interest" description="Disordered" evidence="2">
    <location>
        <begin position="245"/>
        <end position="336"/>
    </location>
</feature>
<feature type="region of interest" description="Disordered" evidence="2">
    <location>
        <begin position="365"/>
        <end position="437"/>
    </location>
</feature>
<feature type="region of interest" description="Disordered" evidence="2">
    <location>
        <begin position="569"/>
        <end position="662"/>
    </location>
</feature>
<feature type="compositionally biased region" description="Polar residues" evidence="2">
    <location>
        <begin position="1"/>
        <end position="15"/>
    </location>
</feature>
<feature type="compositionally biased region" description="Polar residues" evidence="2">
    <location>
        <begin position="22"/>
        <end position="35"/>
    </location>
</feature>
<feature type="compositionally biased region" description="Low complexity" evidence="2">
    <location>
        <begin position="71"/>
        <end position="105"/>
    </location>
</feature>
<feature type="compositionally biased region" description="Polar residues" evidence="2">
    <location>
        <begin position="181"/>
        <end position="200"/>
    </location>
</feature>
<feature type="compositionally biased region" description="Low complexity" evidence="2">
    <location>
        <begin position="201"/>
        <end position="223"/>
    </location>
</feature>
<feature type="compositionally biased region" description="Polar residues" evidence="2">
    <location>
        <begin position="254"/>
        <end position="266"/>
    </location>
</feature>
<feature type="compositionally biased region" description="Low complexity" evidence="2">
    <location>
        <begin position="267"/>
        <end position="304"/>
    </location>
</feature>
<feature type="compositionally biased region" description="Polar residues" evidence="2">
    <location>
        <begin position="313"/>
        <end position="336"/>
    </location>
</feature>
<feature type="compositionally biased region" description="Low complexity" evidence="2">
    <location>
        <begin position="366"/>
        <end position="399"/>
    </location>
</feature>
<feature type="compositionally biased region" description="Polar residues" evidence="2">
    <location>
        <begin position="400"/>
        <end position="413"/>
    </location>
</feature>
<feature type="compositionally biased region" description="Low complexity" evidence="2">
    <location>
        <begin position="414"/>
        <end position="433"/>
    </location>
</feature>
<feature type="compositionally biased region" description="Basic and acidic residues" evidence="2">
    <location>
        <begin position="569"/>
        <end position="582"/>
    </location>
</feature>
<feature type="compositionally biased region" description="Acidic residues" evidence="2">
    <location>
        <begin position="613"/>
        <end position="644"/>
    </location>
</feature>
<feature type="compositionally biased region" description="Low complexity" evidence="2">
    <location>
        <begin position="645"/>
        <end position="654"/>
    </location>
</feature>
<proteinExistence type="evidence at transcript level"/>
<gene>
    <name type="primary">EFH1</name>
    <name type="synonym">PHD1</name>
    <name type="ordered locus">CAALFM_C206340WA</name>
    <name type="ORF">CaO19.12953</name>
    <name type="ORF">CaO19.5498</name>
</gene>
<keyword id="KW-0238">DNA-binding</keyword>
<keyword id="KW-0539">Nucleus</keyword>
<keyword id="KW-1185">Reference proteome</keyword>
<keyword id="KW-0804">Transcription</keyword>
<keyword id="KW-0805">Transcription regulation</keyword>
<keyword id="KW-0843">Virulence</keyword>
<organism>
    <name type="scientific">Candida albicans (strain SC5314 / ATCC MYA-2876)</name>
    <name type="common">Yeast</name>
    <dbReference type="NCBI Taxonomy" id="237561"/>
    <lineage>
        <taxon>Eukaryota</taxon>
        <taxon>Fungi</taxon>
        <taxon>Dikarya</taxon>
        <taxon>Ascomycota</taxon>
        <taxon>Saccharomycotina</taxon>
        <taxon>Pichiomycetes</taxon>
        <taxon>Debaryomycetaceae</taxon>
        <taxon>Candida/Lodderomyces clade</taxon>
        <taxon>Candida</taxon>
    </lineage>
</organism>
<name>EFH1_CANAL</name>